<keyword id="KW-0997">Cell inner membrane</keyword>
<keyword id="KW-1003">Cell membrane</keyword>
<keyword id="KW-0472">Membrane</keyword>
<keyword id="KW-0520">NAD</keyword>
<keyword id="KW-0874">Quinone</keyword>
<keyword id="KW-1278">Translocase</keyword>
<keyword id="KW-0813">Transport</keyword>
<keyword id="KW-0830">Ubiquinone</keyword>
<evidence type="ECO:0000255" key="1">
    <source>
        <dbReference type="HAMAP-Rule" id="MF_01358"/>
    </source>
</evidence>
<protein>
    <recommendedName>
        <fullName evidence="1">NADH-quinone oxidoreductase subunit D</fullName>
        <ecNumber evidence="1">7.1.1.-</ecNumber>
    </recommendedName>
    <alternativeName>
        <fullName evidence="1">NADH dehydrogenase I subunit D</fullName>
    </alternativeName>
    <alternativeName>
        <fullName evidence="1">NDH-1 subunit D</fullName>
    </alternativeName>
</protein>
<accession>Q8YGK3</accession>
<organism>
    <name type="scientific">Brucella melitensis biotype 1 (strain ATCC 23456 / CCUG 17765 / NCTC 10094 / 16M)</name>
    <dbReference type="NCBI Taxonomy" id="224914"/>
    <lineage>
        <taxon>Bacteria</taxon>
        <taxon>Pseudomonadati</taxon>
        <taxon>Pseudomonadota</taxon>
        <taxon>Alphaproteobacteria</taxon>
        <taxon>Hyphomicrobiales</taxon>
        <taxon>Brucellaceae</taxon>
        <taxon>Brucella/Ochrobactrum group</taxon>
        <taxon>Brucella</taxon>
    </lineage>
</organism>
<proteinExistence type="inferred from homology"/>
<comment type="function">
    <text evidence="1">NDH-1 shuttles electrons from NADH, via FMN and iron-sulfur (Fe-S) centers, to quinones in the respiratory chain. The immediate electron acceptor for the enzyme in this species is believed to be ubiquinone. Couples the redox reaction to proton translocation (for every two electrons transferred, four hydrogen ions are translocated across the cytoplasmic membrane), and thus conserves the redox energy in a proton gradient.</text>
</comment>
<comment type="catalytic activity">
    <reaction evidence="1">
        <text>a quinone + NADH + 5 H(+)(in) = a quinol + NAD(+) + 4 H(+)(out)</text>
        <dbReference type="Rhea" id="RHEA:57888"/>
        <dbReference type="ChEBI" id="CHEBI:15378"/>
        <dbReference type="ChEBI" id="CHEBI:24646"/>
        <dbReference type="ChEBI" id="CHEBI:57540"/>
        <dbReference type="ChEBI" id="CHEBI:57945"/>
        <dbReference type="ChEBI" id="CHEBI:132124"/>
    </reaction>
</comment>
<comment type="subunit">
    <text evidence="1">NDH-1 is composed of 14 different subunits. Subunits NuoB, C, D, E, F, and G constitute the peripheral sector of the complex.</text>
</comment>
<comment type="subcellular location">
    <subcellularLocation>
        <location evidence="1">Cell inner membrane</location>
        <topology evidence="1">Peripheral membrane protein</topology>
        <orientation evidence="1">Cytoplasmic side</orientation>
    </subcellularLocation>
</comment>
<comment type="similarity">
    <text evidence="1">Belongs to the complex I 49 kDa subunit family.</text>
</comment>
<name>NUOD_BRUME</name>
<gene>
    <name evidence="1" type="primary">nuoD</name>
    <name type="ordered locus">BMEI1155</name>
</gene>
<reference key="1">
    <citation type="journal article" date="2002" name="Proc. Natl. Acad. Sci. U.S.A.">
        <title>The genome sequence of the facultative intracellular pathogen Brucella melitensis.</title>
        <authorList>
            <person name="DelVecchio V.G."/>
            <person name="Kapatral V."/>
            <person name="Redkar R.J."/>
            <person name="Patra G."/>
            <person name="Mujer C."/>
            <person name="Los T."/>
            <person name="Ivanova N."/>
            <person name="Anderson I."/>
            <person name="Bhattacharyya A."/>
            <person name="Lykidis A."/>
            <person name="Reznik G."/>
            <person name="Jablonski L."/>
            <person name="Larsen N."/>
            <person name="D'Souza M."/>
            <person name="Bernal A."/>
            <person name="Mazur M."/>
            <person name="Goltsman E."/>
            <person name="Selkov E."/>
            <person name="Elzer P.H."/>
            <person name="Hagius S."/>
            <person name="O'Callaghan D."/>
            <person name="Letesson J.-J."/>
            <person name="Haselkorn R."/>
            <person name="Kyrpides N.C."/>
            <person name="Overbeek R."/>
        </authorList>
    </citation>
    <scope>NUCLEOTIDE SEQUENCE [LARGE SCALE GENOMIC DNA]</scope>
    <source>
        <strain>ATCC 23456 / CCUG 17765 / NCTC 10094 / 16M</strain>
    </source>
</reference>
<dbReference type="EC" id="7.1.1.-" evidence="1"/>
<dbReference type="EMBL" id="AE008917">
    <property type="protein sequence ID" value="AAL52336.1"/>
    <property type="molecule type" value="Genomic_DNA"/>
</dbReference>
<dbReference type="PIR" id="AE3396">
    <property type="entry name" value="AE3396"/>
</dbReference>
<dbReference type="RefSeq" id="WP_004683613.1">
    <property type="nucleotide sequence ID" value="NC_003317.1"/>
</dbReference>
<dbReference type="SMR" id="Q8YGK3"/>
<dbReference type="GeneID" id="29593999"/>
<dbReference type="KEGG" id="bme:BMEI1155"/>
<dbReference type="KEGG" id="bmel:DK63_258"/>
<dbReference type="PATRIC" id="fig|224914.52.peg.267"/>
<dbReference type="eggNOG" id="COG0649">
    <property type="taxonomic scope" value="Bacteria"/>
</dbReference>
<dbReference type="PhylomeDB" id="Q8YGK3"/>
<dbReference type="Proteomes" id="UP000000419">
    <property type="component" value="Chromosome I"/>
</dbReference>
<dbReference type="GO" id="GO:0005886">
    <property type="term" value="C:plasma membrane"/>
    <property type="evidence" value="ECO:0007669"/>
    <property type="project" value="UniProtKB-SubCell"/>
</dbReference>
<dbReference type="GO" id="GO:0051287">
    <property type="term" value="F:NAD binding"/>
    <property type="evidence" value="ECO:0007669"/>
    <property type="project" value="InterPro"/>
</dbReference>
<dbReference type="GO" id="GO:0050136">
    <property type="term" value="F:NADH:ubiquinone reductase (non-electrogenic) activity"/>
    <property type="evidence" value="ECO:0007669"/>
    <property type="project" value="UniProtKB-UniRule"/>
</dbReference>
<dbReference type="GO" id="GO:0048038">
    <property type="term" value="F:quinone binding"/>
    <property type="evidence" value="ECO:0007669"/>
    <property type="project" value="UniProtKB-KW"/>
</dbReference>
<dbReference type="FunFam" id="1.10.645.10:FF:000005">
    <property type="entry name" value="NADH-quinone oxidoreductase subunit D"/>
    <property type="match status" value="1"/>
</dbReference>
<dbReference type="Gene3D" id="1.10.645.10">
    <property type="entry name" value="Cytochrome-c3 Hydrogenase, chain B"/>
    <property type="match status" value="1"/>
</dbReference>
<dbReference type="HAMAP" id="MF_01358">
    <property type="entry name" value="NDH1_NuoD"/>
    <property type="match status" value="1"/>
</dbReference>
<dbReference type="InterPro" id="IPR001135">
    <property type="entry name" value="NADH_Q_OxRdtase_suD"/>
</dbReference>
<dbReference type="InterPro" id="IPR014029">
    <property type="entry name" value="NADH_UbQ_OxRdtase_49kDa_CS"/>
</dbReference>
<dbReference type="InterPro" id="IPR022885">
    <property type="entry name" value="NDH1_su_D/H"/>
</dbReference>
<dbReference type="InterPro" id="IPR029014">
    <property type="entry name" value="NiFe-Hase_large"/>
</dbReference>
<dbReference type="NCBIfam" id="TIGR01962">
    <property type="entry name" value="NuoD"/>
    <property type="match status" value="1"/>
</dbReference>
<dbReference type="NCBIfam" id="NF004739">
    <property type="entry name" value="PRK06075.1"/>
    <property type="match status" value="1"/>
</dbReference>
<dbReference type="PANTHER" id="PTHR11993:SF10">
    <property type="entry name" value="NADH DEHYDROGENASE [UBIQUINONE] IRON-SULFUR PROTEIN 2, MITOCHONDRIAL"/>
    <property type="match status" value="1"/>
</dbReference>
<dbReference type="PANTHER" id="PTHR11993">
    <property type="entry name" value="NADH-UBIQUINONE OXIDOREDUCTASE 49 KDA SUBUNIT"/>
    <property type="match status" value="1"/>
</dbReference>
<dbReference type="Pfam" id="PF00346">
    <property type="entry name" value="Complex1_49kDa"/>
    <property type="match status" value="1"/>
</dbReference>
<dbReference type="SUPFAM" id="SSF56762">
    <property type="entry name" value="HydB/Nqo4-like"/>
    <property type="match status" value="1"/>
</dbReference>
<dbReference type="PROSITE" id="PS00535">
    <property type="entry name" value="COMPLEX1_49K"/>
    <property type="match status" value="1"/>
</dbReference>
<feature type="chain" id="PRO_0000357786" description="NADH-quinone oxidoreductase subunit D">
    <location>
        <begin position="1"/>
        <end position="396"/>
    </location>
</feature>
<sequence length="396" mass="45011">MAETQVRNFNINFGPQHPAAHGVLRLVLELDGEVVERVDPHIGLLHRGTEKLMEAKTYLQAVPYLDRLDYVAPMNQEHAYALAVERLLDIEVPKRGQLIRVLYSEIGRILNHLLNVTTQAMDVGALTPPLWGFEEREKLMVFYERACGARMHAAYFRPGGVHQDLPDQLIEDIGKWIDPFFTTLKNLDDLITPNRIFKQRNVDIGVVKLEDAWAWGFSGVMVRGSGAAWDLRKSQPYECYSEMEFDIPVGKNGDCYDRYLIRMEEMRQSVRIMRQCVDLLLGKERVGPVSNTDHKIVPPKRGEMKRSMEALIHHFKLYTEGYHVPAGEVYAAVEAPKGEFGVYLVSDGSNKPYRCKLRAPGFAHLQAMDFLCRGHMLADVSAILGSLDIVFGEVDR</sequence>